<accession>Q5QW31</accession>
<sequence>MRSSKYLLSTLKETPSDAEIVSHQLMLRAGMIRKVAAGLYTWTPTGLRVLRKVENVVREEMEAINALEILMPMVQPADLWQESGRWDDYGPELLRIKDRNQRDFLLGPTHEEIISQLVRKEVSSYKQLPLTLFQIQTKFRDEIRPRFGVMRAREFLMKDAYSFHLTDESLQKTYDDMYKAYCRIFERLGLDYRPVIADTGSIGGSHSHEFHVLASSGEDAIAFSDSSDYAANVEMAEALAPAGERPAPNQKVEKHEVQGDELAAVLQPLSVESQQATKSFIVKAADDIDSEYVQLVLRADHELNTVKAEKLAQVAAPLEILTETEKATGVEAPYIGVVNAKLPLLVDSSAAHLADFACGANENGQWLTGVNWKRDTGDFSVVDIRNVVAGDPSPCGQGKVKIARGIEVGHIFQLGKKYSDAMKVGVLSESGKHETLTMGCYGIGVSRIVAAAIEQNNDERGICWPEALAPFQVVIVPMNMHKSARVQEAAEKLYTDLKAQGIDVLFDDRKERPGVMFTDMELIGIPHQVVVGERNLDENQVEYQSRKGGEKQKINLDDCISFIQQQL</sequence>
<reference key="1">
    <citation type="journal article" date="2004" name="Proc. Natl. Acad. Sci. U.S.A.">
        <title>Genome sequence of the deep-sea gamma-proteobacterium Idiomarina loihiensis reveals amino acid fermentation as a source of carbon and energy.</title>
        <authorList>
            <person name="Hou S."/>
            <person name="Saw J.H."/>
            <person name="Lee K.S."/>
            <person name="Freitas T.A."/>
            <person name="Belisle C."/>
            <person name="Kawarabayasi Y."/>
            <person name="Donachie S.P."/>
            <person name="Pikina A."/>
            <person name="Galperin M.Y."/>
            <person name="Koonin E.V."/>
            <person name="Makarova K.S."/>
            <person name="Omelchenko M.V."/>
            <person name="Sorokin A."/>
            <person name="Wolf Y.I."/>
            <person name="Li Q.X."/>
            <person name="Keum Y.S."/>
            <person name="Campbell S."/>
            <person name="Denery J."/>
            <person name="Aizawa S."/>
            <person name="Shibata S."/>
            <person name="Malahoff A."/>
            <person name="Alam M."/>
        </authorList>
    </citation>
    <scope>NUCLEOTIDE SEQUENCE [LARGE SCALE GENOMIC DNA]</scope>
    <source>
        <strain>ATCC BAA-735 / DSM 15497 / L2-TR</strain>
    </source>
</reference>
<comment type="function">
    <text evidence="1">Catalyzes the attachment of proline to tRNA(Pro) in a two-step reaction: proline is first activated by ATP to form Pro-AMP and then transferred to the acceptor end of tRNA(Pro). As ProRS can inadvertently accommodate and process non-cognate amino acids such as alanine and cysteine, to avoid such errors it has two additional distinct editing activities against alanine. One activity is designated as 'pretransfer' editing and involves the tRNA(Pro)-independent hydrolysis of activated Ala-AMP. The other activity is designated 'posttransfer' editing and involves deacylation of mischarged Ala-tRNA(Pro). The misacylated Cys-tRNA(Pro) is not edited by ProRS.</text>
</comment>
<comment type="catalytic activity">
    <reaction evidence="1">
        <text>tRNA(Pro) + L-proline + ATP = L-prolyl-tRNA(Pro) + AMP + diphosphate</text>
        <dbReference type="Rhea" id="RHEA:14305"/>
        <dbReference type="Rhea" id="RHEA-COMP:9700"/>
        <dbReference type="Rhea" id="RHEA-COMP:9702"/>
        <dbReference type="ChEBI" id="CHEBI:30616"/>
        <dbReference type="ChEBI" id="CHEBI:33019"/>
        <dbReference type="ChEBI" id="CHEBI:60039"/>
        <dbReference type="ChEBI" id="CHEBI:78442"/>
        <dbReference type="ChEBI" id="CHEBI:78532"/>
        <dbReference type="ChEBI" id="CHEBI:456215"/>
        <dbReference type="EC" id="6.1.1.15"/>
    </reaction>
</comment>
<comment type="subunit">
    <text evidence="1">Homodimer.</text>
</comment>
<comment type="subcellular location">
    <subcellularLocation>
        <location evidence="1">Cytoplasm</location>
    </subcellularLocation>
</comment>
<comment type="domain">
    <text evidence="1">Consists of three domains: the N-terminal catalytic domain, the editing domain and the C-terminal anticodon-binding domain.</text>
</comment>
<comment type="similarity">
    <text evidence="1">Belongs to the class-II aminoacyl-tRNA synthetase family. ProS type 1 subfamily.</text>
</comment>
<name>SYP_IDILO</name>
<dbReference type="EC" id="6.1.1.15" evidence="1"/>
<dbReference type="EMBL" id="AE017340">
    <property type="protein sequence ID" value="AAV81726.1"/>
    <property type="molecule type" value="Genomic_DNA"/>
</dbReference>
<dbReference type="RefSeq" id="WP_011234137.1">
    <property type="nucleotide sequence ID" value="NC_006512.1"/>
</dbReference>
<dbReference type="SMR" id="Q5QW31"/>
<dbReference type="STRING" id="283942.IL0886"/>
<dbReference type="GeneID" id="41336042"/>
<dbReference type="KEGG" id="ilo:IL0886"/>
<dbReference type="eggNOG" id="COG0442">
    <property type="taxonomic scope" value="Bacteria"/>
</dbReference>
<dbReference type="HOGENOM" id="CLU_016739_0_0_6"/>
<dbReference type="OrthoDB" id="9809052at2"/>
<dbReference type="Proteomes" id="UP000001171">
    <property type="component" value="Chromosome"/>
</dbReference>
<dbReference type="GO" id="GO:0005829">
    <property type="term" value="C:cytosol"/>
    <property type="evidence" value="ECO:0007669"/>
    <property type="project" value="TreeGrafter"/>
</dbReference>
<dbReference type="GO" id="GO:0002161">
    <property type="term" value="F:aminoacyl-tRNA deacylase activity"/>
    <property type="evidence" value="ECO:0007669"/>
    <property type="project" value="InterPro"/>
</dbReference>
<dbReference type="GO" id="GO:0005524">
    <property type="term" value="F:ATP binding"/>
    <property type="evidence" value="ECO:0007669"/>
    <property type="project" value="UniProtKB-UniRule"/>
</dbReference>
<dbReference type="GO" id="GO:0004827">
    <property type="term" value="F:proline-tRNA ligase activity"/>
    <property type="evidence" value="ECO:0007669"/>
    <property type="project" value="UniProtKB-UniRule"/>
</dbReference>
<dbReference type="GO" id="GO:0006433">
    <property type="term" value="P:prolyl-tRNA aminoacylation"/>
    <property type="evidence" value="ECO:0007669"/>
    <property type="project" value="UniProtKB-UniRule"/>
</dbReference>
<dbReference type="CDD" id="cd04334">
    <property type="entry name" value="ProRS-INS"/>
    <property type="match status" value="1"/>
</dbReference>
<dbReference type="CDD" id="cd00861">
    <property type="entry name" value="ProRS_anticodon_short"/>
    <property type="match status" value="1"/>
</dbReference>
<dbReference type="CDD" id="cd00779">
    <property type="entry name" value="ProRS_core_prok"/>
    <property type="match status" value="1"/>
</dbReference>
<dbReference type="FunFam" id="3.30.930.10:FF:000012">
    <property type="entry name" value="Proline--tRNA ligase"/>
    <property type="match status" value="1"/>
</dbReference>
<dbReference type="FunFam" id="3.40.50.800:FF:000006">
    <property type="entry name" value="Proline--tRNA ligase"/>
    <property type="match status" value="1"/>
</dbReference>
<dbReference type="Gene3D" id="3.40.50.800">
    <property type="entry name" value="Anticodon-binding domain"/>
    <property type="match status" value="1"/>
</dbReference>
<dbReference type="Gene3D" id="3.30.930.10">
    <property type="entry name" value="Bira Bifunctional Protein, Domain 2"/>
    <property type="match status" value="2"/>
</dbReference>
<dbReference type="HAMAP" id="MF_01569">
    <property type="entry name" value="Pro_tRNA_synth_type1"/>
    <property type="match status" value="1"/>
</dbReference>
<dbReference type="InterPro" id="IPR002314">
    <property type="entry name" value="aa-tRNA-synt_IIb"/>
</dbReference>
<dbReference type="InterPro" id="IPR006195">
    <property type="entry name" value="aa-tRNA-synth_II"/>
</dbReference>
<dbReference type="InterPro" id="IPR045864">
    <property type="entry name" value="aa-tRNA-synth_II/BPL/LPL"/>
</dbReference>
<dbReference type="InterPro" id="IPR004154">
    <property type="entry name" value="Anticodon-bd"/>
</dbReference>
<dbReference type="InterPro" id="IPR036621">
    <property type="entry name" value="Anticodon-bd_dom_sf"/>
</dbReference>
<dbReference type="InterPro" id="IPR002316">
    <property type="entry name" value="Pro-tRNA-ligase_IIa"/>
</dbReference>
<dbReference type="InterPro" id="IPR004500">
    <property type="entry name" value="Pro-tRNA-synth_IIa_bac-type"/>
</dbReference>
<dbReference type="InterPro" id="IPR023717">
    <property type="entry name" value="Pro-tRNA-Synthase_IIa_type1"/>
</dbReference>
<dbReference type="InterPro" id="IPR050062">
    <property type="entry name" value="Pro-tRNA_synthetase"/>
</dbReference>
<dbReference type="InterPro" id="IPR044140">
    <property type="entry name" value="ProRS_anticodon_short"/>
</dbReference>
<dbReference type="InterPro" id="IPR033730">
    <property type="entry name" value="ProRS_core_prok"/>
</dbReference>
<dbReference type="InterPro" id="IPR036754">
    <property type="entry name" value="YbaK/aa-tRNA-synt-asso_dom_sf"/>
</dbReference>
<dbReference type="InterPro" id="IPR007214">
    <property type="entry name" value="YbaK/aa-tRNA-synth-assoc-dom"/>
</dbReference>
<dbReference type="NCBIfam" id="NF006625">
    <property type="entry name" value="PRK09194.1"/>
    <property type="match status" value="1"/>
</dbReference>
<dbReference type="NCBIfam" id="TIGR00409">
    <property type="entry name" value="proS_fam_II"/>
    <property type="match status" value="1"/>
</dbReference>
<dbReference type="PANTHER" id="PTHR42753">
    <property type="entry name" value="MITOCHONDRIAL RIBOSOME PROTEIN L39/PROLYL-TRNA LIGASE FAMILY MEMBER"/>
    <property type="match status" value="1"/>
</dbReference>
<dbReference type="PANTHER" id="PTHR42753:SF2">
    <property type="entry name" value="PROLINE--TRNA LIGASE"/>
    <property type="match status" value="1"/>
</dbReference>
<dbReference type="Pfam" id="PF03129">
    <property type="entry name" value="HGTP_anticodon"/>
    <property type="match status" value="1"/>
</dbReference>
<dbReference type="Pfam" id="PF00587">
    <property type="entry name" value="tRNA-synt_2b"/>
    <property type="match status" value="1"/>
</dbReference>
<dbReference type="Pfam" id="PF04073">
    <property type="entry name" value="tRNA_edit"/>
    <property type="match status" value="1"/>
</dbReference>
<dbReference type="PIRSF" id="PIRSF001535">
    <property type="entry name" value="ProRS_1"/>
    <property type="match status" value="1"/>
</dbReference>
<dbReference type="PRINTS" id="PR01046">
    <property type="entry name" value="TRNASYNTHPRO"/>
</dbReference>
<dbReference type="SUPFAM" id="SSF52954">
    <property type="entry name" value="Class II aaRS ABD-related"/>
    <property type="match status" value="1"/>
</dbReference>
<dbReference type="SUPFAM" id="SSF55681">
    <property type="entry name" value="Class II aaRS and biotin synthetases"/>
    <property type="match status" value="1"/>
</dbReference>
<dbReference type="SUPFAM" id="SSF55826">
    <property type="entry name" value="YbaK/ProRS associated domain"/>
    <property type="match status" value="1"/>
</dbReference>
<dbReference type="PROSITE" id="PS50862">
    <property type="entry name" value="AA_TRNA_LIGASE_II"/>
    <property type="match status" value="1"/>
</dbReference>
<evidence type="ECO:0000255" key="1">
    <source>
        <dbReference type="HAMAP-Rule" id="MF_01569"/>
    </source>
</evidence>
<gene>
    <name evidence="1" type="primary">proS</name>
    <name type="ordered locus">IL0886</name>
</gene>
<keyword id="KW-0030">Aminoacyl-tRNA synthetase</keyword>
<keyword id="KW-0067">ATP-binding</keyword>
<keyword id="KW-0963">Cytoplasm</keyword>
<keyword id="KW-0436">Ligase</keyword>
<keyword id="KW-0547">Nucleotide-binding</keyword>
<keyword id="KW-0648">Protein biosynthesis</keyword>
<keyword id="KW-1185">Reference proteome</keyword>
<proteinExistence type="inferred from homology"/>
<organism>
    <name type="scientific">Idiomarina loihiensis (strain ATCC BAA-735 / DSM 15497 / L2-TR)</name>
    <dbReference type="NCBI Taxonomy" id="283942"/>
    <lineage>
        <taxon>Bacteria</taxon>
        <taxon>Pseudomonadati</taxon>
        <taxon>Pseudomonadota</taxon>
        <taxon>Gammaproteobacteria</taxon>
        <taxon>Alteromonadales</taxon>
        <taxon>Idiomarinaceae</taxon>
        <taxon>Idiomarina</taxon>
    </lineage>
</organism>
<protein>
    <recommendedName>
        <fullName evidence="1">Proline--tRNA ligase</fullName>
        <ecNumber evidence="1">6.1.1.15</ecNumber>
    </recommendedName>
    <alternativeName>
        <fullName evidence="1">Prolyl-tRNA synthetase</fullName>
        <shortName evidence="1">ProRS</shortName>
    </alternativeName>
</protein>
<feature type="chain" id="PRO_0000248704" description="Proline--tRNA ligase">
    <location>
        <begin position="1"/>
        <end position="567"/>
    </location>
</feature>